<comment type="function">
    <text evidence="2">Cell wall formation.</text>
</comment>
<comment type="catalytic activity">
    <reaction evidence="2">
        <text>2 D-alanine + ATP = D-alanyl-D-alanine + ADP + phosphate + H(+)</text>
        <dbReference type="Rhea" id="RHEA:11224"/>
        <dbReference type="ChEBI" id="CHEBI:15378"/>
        <dbReference type="ChEBI" id="CHEBI:30616"/>
        <dbReference type="ChEBI" id="CHEBI:43474"/>
        <dbReference type="ChEBI" id="CHEBI:57416"/>
        <dbReference type="ChEBI" id="CHEBI:57822"/>
        <dbReference type="ChEBI" id="CHEBI:456216"/>
        <dbReference type="EC" id="6.3.2.4"/>
    </reaction>
</comment>
<comment type="cofactor">
    <cofactor evidence="1">
        <name>Mg(2+)</name>
        <dbReference type="ChEBI" id="CHEBI:18420"/>
    </cofactor>
    <cofactor evidence="1">
        <name>Mn(2+)</name>
        <dbReference type="ChEBI" id="CHEBI:29035"/>
    </cofactor>
    <text evidence="1">Binds 2 magnesium or manganese ions per subunit.</text>
</comment>
<comment type="pathway">
    <text evidence="2">Cell wall biogenesis; peptidoglycan biosynthesis.</text>
</comment>
<comment type="subcellular location">
    <subcellularLocation>
        <location evidence="2">Cytoplasm</location>
    </subcellularLocation>
</comment>
<comment type="similarity">
    <text evidence="2">Belongs to the D-alanine--D-alanine ligase family.</text>
</comment>
<evidence type="ECO:0000250" key="1"/>
<evidence type="ECO:0000255" key="2">
    <source>
        <dbReference type="HAMAP-Rule" id="MF_00047"/>
    </source>
</evidence>
<feature type="chain" id="PRO_0000341051" description="D-alanine--D-alanine ligase">
    <location>
        <begin position="1"/>
        <end position="308"/>
    </location>
</feature>
<feature type="domain" description="ATP-grasp" evidence="2">
    <location>
        <begin position="105"/>
        <end position="302"/>
    </location>
</feature>
<feature type="binding site" evidence="2">
    <location>
        <begin position="133"/>
        <end position="188"/>
    </location>
    <ligand>
        <name>ATP</name>
        <dbReference type="ChEBI" id="CHEBI:30616"/>
    </ligand>
</feature>
<feature type="binding site" evidence="2">
    <location>
        <position position="256"/>
    </location>
    <ligand>
        <name>Mg(2+)</name>
        <dbReference type="ChEBI" id="CHEBI:18420"/>
        <label>1</label>
    </ligand>
</feature>
<feature type="binding site" evidence="2">
    <location>
        <position position="269"/>
    </location>
    <ligand>
        <name>Mg(2+)</name>
        <dbReference type="ChEBI" id="CHEBI:18420"/>
        <label>1</label>
    </ligand>
</feature>
<feature type="binding site" evidence="2">
    <location>
        <position position="269"/>
    </location>
    <ligand>
        <name>Mg(2+)</name>
        <dbReference type="ChEBI" id="CHEBI:18420"/>
        <label>2</label>
    </ligand>
</feature>
<feature type="binding site" evidence="2">
    <location>
        <position position="271"/>
    </location>
    <ligand>
        <name>Mg(2+)</name>
        <dbReference type="ChEBI" id="CHEBI:18420"/>
        <label>2</label>
    </ligand>
</feature>
<protein>
    <recommendedName>
        <fullName evidence="2">D-alanine--D-alanine ligase</fullName>
        <ecNumber evidence="2">6.3.2.4</ecNumber>
    </recommendedName>
    <alternativeName>
        <fullName evidence="2">D-Ala-D-Ala ligase</fullName>
    </alternativeName>
    <alternativeName>
        <fullName evidence="2">D-alanylalanine synthetase</fullName>
    </alternativeName>
</protein>
<gene>
    <name evidence="2" type="primary">ddl</name>
    <name type="ordered locus">Anae109_3887</name>
</gene>
<keyword id="KW-0067">ATP-binding</keyword>
<keyword id="KW-0133">Cell shape</keyword>
<keyword id="KW-0961">Cell wall biogenesis/degradation</keyword>
<keyword id="KW-0963">Cytoplasm</keyword>
<keyword id="KW-0436">Ligase</keyword>
<keyword id="KW-0460">Magnesium</keyword>
<keyword id="KW-0464">Manganese</keyword>
<keyword id="KW-0479">Metal-binding</keyword>
<keyword id="KW-0547">Nucleotide-binding</keyword>
<keyword id="KW-0573">Peptidoglycan synthesis</keyword>
<keyword id="KW-1185">Reference proteome</keyword>
<sequence>MGKWTGKKVAVLYGGRSSEREVSLRTGAACADALRARGHDVTLVDVDAELPARLRELRVDVAFVALHGRWGEDGCVQGLLECMGIPYTGSGVTASAMGMDKTVSKAIFKALGLDVIEYRAFPPARAAEIDLRDLPFGVPCVVKPAGEGSSVGVQIVKDAARLADACREAARYKGDVVVERYVKGTEVNVAVLEGKALGAIEIAPANEFYDYAAKYTAGTTRYYYPARIPEAHASRVMAAAEAAHRGLGCSGVTRVDFIVAPDGTPFILEVNTLPGMTATSLVPKIAAGLGLAFPELCERILDGAALKA</sequence>
<proteinExistence type="inferred from homology"/>
<organism>
    <name type="scientific">Anaeromyxobacter sp. (strain Fw109-5)</name>
    <dbReference type="NCBI Taxonomy" id="404589"/>
    <lineage>
        <taxon>Bacteria</taxon>
        <taxon>Pseudomonadati</taxon>
        <taxon>Myxococcota</taxon>
        <taxon>Myxococcia</taxon>
        <taxon>Myxococcales</taxon>
        <taxon>Cystobacterineae</taxon>
        <taxon>Anaeromyxobacteraceae</taxon>
        <taxon>Anaeromyxobacter</taxon>
    </lineage>
</organism>
<dbReference type="EC" id="6.3.2.4" evidence="2"/>
<dbReference type="EMBL" id="CP000769">
    <property type="protein sequence ID" value="ABS28066.1"/>
    <property type="molecule type" value="Genomic_DNA"/>
</dbReference>
<dbReference type="RefSeq" id="WP_012098700.1">
    <property type="nucleotide sequence ID" value="NC_009675.1"/>
</dbReference>
<dbReference type="SMR" id="A7HH70"/>
<dbReference type="STRING" id="404589.Anae109_3887"/>
<dbReference type="KEGG" id="afw:Anae109_3887"/>
<dbReference type="eggNOG" id="COG1181">
    <property type="taxonomic scope" value="Bacteria"/>
</dbReference>
<dbReference type="HOGENOM" id="CLU_039268_1_1_7"/>
<dbReference type="OrthoDB" id="9813261at2"/>
<dbReference type="UniPathway" id="UPA00219"/>
<dbReference type="Proteomes" id="UP000006382">
    <property type="component" value="Chromosome"/>
</dbReference>
<dbReference type="GO" id="GO:0005737">
    <property type="term" value="C:cytoplasm"/>
    <property type="evidence" value="ECO:0007669"/>
    <property type="project" value="UniProtKB-SubCell"/>
</dbReference>
<dbReference type="GO" id="GO:0005524">
    <property type="term" value="F:ATP binding"/>
    <property type="evidence" value="ECO:0007669"/>
    <property type="project" value="UniProtKB-KW"/>
</dbReference>
<dbReference type="GO" id="GO:0008716">
    <property type="term" value="F:D-alanine-D-alanine ligase activity"/>
    <property type="evidence" value="ECO:0007669"/>
    <property type="project" value="UniProtKB-UniRule"/>
</dbReference>
<dbReference type="GO" id="GO:0046872">
    <property type="term" value="F:metal ion binding"/>
    <property type="evidence" value="ECO:0007669"/>
    <property type="project" value="UniProtKB-KW"/>
</dbReference>
<dbReference type="GO" id="GO:0071555">
    <property type="term" value="P:cell wall organization"/>
    <property type="evidence" value="ECO:0007669"/>
    <property type="project" value="UniProtKB-KW"/>
</dbReference>
<dbReference type="GO" id="GO:0009252">
    <property type="term" value="P:peptidoglycan biosynthetic process"/>
    <property type="evidence" value="ECO:0007669"/>
    <property type="project" value="UniProtKB-UniRule"/>
</dbReference>
<dbReference type="GO" id="GO:0008360">
    <property type="term" value="P:regulation of cell shape"/>
    <property type="evidence" value="ECO:0007669"/>
    <property type="project" value="UniProtKB-KW"/>
</dbReference>
<dbReference type="FunFam" id="3.30.470.20:FF:000008">
    <property type="entry name" value="D-alanine--D-alanine ligase"/>
    <property type="match status" value="1"/>
</dbReference>
<dbReference type="Gene3D" id="3.40.50.20">
    <property type="match status" value="1"/>
</dbReference>
<dbReference type="Gene3D" id="3.30.1490.20">
    <property type="entry name" value="ATP-grasp fold, A domain"/>
    <property type="match status" value="1"/>
</dbReference>
<dbReference type="Gene3D" id="3.30.470.20">
    <property type="entry name" value="ATP-grasp fold, B domain"/>
    <property type="match status" value="1"/>
</dbReference>
<dbReference type="HAMAP" id="MF_00047">
    <property type="entry name" value="Dala_Dala_lig"/>
    <property type="match status" value="1"/>
</dbReference>
<dbReference type="InterPro" id="IPR011761">
    <property type="entry name" value="ATP-grasp"/>
</dbReference>
<dbReference type="InterPro" id="IPR013815">
    <property type="entry name" value="ATP_grasp_subdomain_1"/>
</dbReference>
<dbReference type="InterPro" id="IPR000291">
    <property type="entry name" value="D-Ala_lig_Van_CS"/>
</dbReference>
<dbReference type="InterPro" id="IPR005905">
    <property type="entry name" value="D_ala_D_ala"/>
</dbReference>
<dbReference type="InterPro" id="IPR011095">
    <property type="entry name" value="Dala_Dala_lig_C"/>
</dbReference>
<dbReference type="InterPro" id="IPR011127">
    <property type="entry name" value="Dala_Dala_lig_N"/>
</dbReference>
<dbReference type="InterPro" id="IPR016185">
    <property type="entry name" value="PreATP-grasp_dom_sf"/>
</dbReference>
<dbReference type="NCBIfam" id="TIGR01205">
    <property type="entry name" value="D_ala_D_alaTIGR"/>
    <property type="match status" value="1"/>
</dbReference>
<dbReference type="NCBIfam" id="NF002378">
    <property type="entry name" value="PRK01372.1"/>
    <property type="match status" value="1"/>
</dbReference>
<dbReference type="PANTHER" id="PTHR23132">
    <property type="entry name" value="D-ALANINE--D-ALANINE LIGASE"/>
    <property type="match status" value="1"/>
</dbReference>
<dbReference type="PANTHER" id="PTHR23132:SF23">
    <property type="entry name" value="D-ALANINE--D-ALANINE LIGASE B"/>
    <property type="match status" value="1"/>
</dbReference>
<dbReference type="Pfam" id="PF07478">
    <property type="entry name" value="Dala_Dala_lig_C"/>
    <property type="match status" value="1"/>
</dbReference>
<dbReference type="Pfam" id="PF01820">
    <property type="entry name" value="Dala_Dala_lig_N"/>
    <property type="match status" value="2"/>
</dbReference>
<dbReference type="PIRSF" id="PIRSF039102">
    <property type="entry name" value="Ddl/VanB"/>
    <property type="match status" value="1"/>
</dbReference>
<dbReference type="SUPFAM" id="SSF56059">
    <property type="entry name" value="Glutathione synthetase ATP-binding domain-like"/>
    <property type="match status" value="1"/>
</dbReference>
<dbReference type="SUPFAM" id="SSF52440">
    <property type="entry name" value="PreATP-grasp domain"/>
    <property type="match status" value="1"/>
</dbReference>
<dbReference type="PROSITE" id="PS50975">
    <property type="entry name" value="ATP_GRASP"/>
    <property type="match status" value="1"/>
</dbReference>
<dbReference type="PROSITE" id="PS00843">
    <property type="entry name" value="DALA_DALA_LIGASE_1"/>
    <property type="match status" value="1"/>
</dbReference>
<dbReference type="PROSITE" id="PS00844">
    <property type="entry name" value="DALA_DALA_LIGASE_2"/>
    <property type="match status" value="1"/>
</dbReference>
<reference key="1">
    <citation type="journal article" date="2015" name="Genome Announc.">
        <title>Complete genome sequence of Anaeromyxobacter sp. Fw109-5, an anaerobic, metal-reducing bacterium isolated from a contaminated subsurface environment.</title>
        <authorList>
            <person name="Hwang C."/>
            <person name="Copeland A."/>
            <person name="Lucas S."/>
            <person name="Lapidus A."/>
            <person name="Barry K."/>
            <person name="Glavina Del Rio T."/>
            <person name="Dalin E."/>
            <person name="Tice H."/>
            <person name="Pitluck S."/>
            <person name="Sims D."/>
            <person name="Brettin T."/>
            <person name="Bruce D.C."/>
            <person name="Detter J.C."/>
            <person name="Han C.S."/>
            <person name="Schmutz J."/>
            <person name="Larimer F.W."/>
            <person name="Land M.L."/>
            <person name="Hauser L.J."/>
            <person name="Kyrpides N."/>
            <person name="Lykidis A."/>
            <person name="Richardson P."/>
            <person name="Belieav A."/>
            <person name="Sanford R.A."/>
            <person name="Loeffler F.E."/>
            <person name="Fields M.W."/>
        </authorList>
    </citation>
    <scope>NUCLEOTIDE SEQUENCE [LARGE SCALE GENOMIC DNA]</scope>
    <source>
        <strain>Fw109-5</strain>
    </source>
</reference>
<accession>A7HH70</accession>
<name>DDL_ANADF</name>